<organism>
    <name type="scientific">Petunia hybrida</name>
    <name type="common">Petunia</name>
    <dbReference type="NCBI Taxonomy" id="4102"/>
    <lineage>
        <taxon>Eukaryota</taxon>
        <taxon>Viridiplantae</taxon>
        <taxon>Streptophyta</taxon>
        <taxon>Embryophyta</taxon>
        <taxon>Tracheophyta</taxon>
        <taxon>Spermatophyta</taxon>
        <taxon>Magnoliopsida</taxon>
        <taxon>eudicotyledons</taxon>
        <taxon>Gunneridae</taxon>
        <taxon>Pentapetalae</taxon>
        <taxon>asterids</taxon>
        <taxon>lamiids</taxon>
        <taxon>Solanales</taxon>
        <taxon>Solanaceae</taxon>
        <taxon>Petunioideae</taxon>
        <taxon>Petunia</taxon>
    </lineage>
</organism>
<accession>P48495</accession>
<sequence length="254" mass="27132">MGRKFFVGGNWKCNGTAEEVKKILATLNAADVPSQDVVEVVVSPPYVFLPLVKNELRPDFHVAAQNCWVKKGGAFTGEVSAEMLVNLSIPWVILGHSERRALLGESNEFVGDKVAYALSQGLKVIACVGETLEERESGSTMDVVAAQTKAIADRVKDWTNVVVAYEPVWAIGTGKVASPAQAQEVHAELRKWLAANVSPEVAASTRIIYGGSVNGANCKELGGQPDVDGFLVGGASLKPEFIDIIKAAEVKRNA</sequence>
<name>TPIS_PETHY</name>
<keyword id="KW-0963">Cytoplasm</keyword>
<keyword id="KW-0312">Gluconeogenesis</keyword>
<keyword id="KW-0324">Glycolysis</keyword>
<keyword id="KW-0413">Isomerase</keyword>
<protein>
    <recommendedName>
        <fullName>Triosephosphate isomerase, cytosolic</fullName>
        <shortName>TIM</shortName>
        <shortName>Triose-phosphate isomerase</shortName>
        <ecNumber>5.3.1.1</ecNumber>
    </recommendedName>
</protein>
<reference key="1">
    <citation type="journal article" date="1995" name="J. Plant Physiol.">
        <title>Developmental and horomal regulation of triosephosphate isomerase gene in petunia corollas.</title>
        <authorList>
            <person name="Ben-Nissan G."/>
            <person name="Weiss D."/>
        </authorList>
    </citation>
    <scope>NUCLEOTIDE SEQUENCE [MRNA]</scope>
    <source>
        <strain>cv. Violet 26</strain>
        <tissue>Corolla</tissue>
    </source>
</reference>
<dbReference type="EC" id="5.3.1.1"/>
<dbReference type="EMBL" id="X83227">
    <property type="protein sequence ID" value="CAA58230.1"/>
    <property type="molecule type" value="mRNA"/>
</dbReference>
<dbReference type="SMR" id="P48495"/>
<dbReference type="UniPathway" id="UPA00109">
    <property type="reaction ID" value="UER00189"/>
</dbReference>
<dbReference type="UniPathway" id="UPA00138"/>
<dbReference type="GO" id="GO:0005829">
    <property type="term" value="C:cytosol"/>
    <property type="evidence" value="ECO:0007669"/>
    <property type="project" value="TreeGrafter"/>
</dbReference>
<dbReference type="GO" id="GO:0004807">
    <property type="term" value="F:triose-phosphate isomerase activity"/>
    <property type="evidence" value="ECO:0007669"/>
    <property type="project" value="UniProtKB-EC"/>
</dbReference>
<dbReference type="GO" id="GO:0006094">
    <property type="term" value="P:gluconeogenesis"/>
    <property type="evidence" value="ECO:0007669"/>
    <property type="project" value="UniProtKB-UniPathway"/>
</dbReference>
<dbReference type="GO" id="GO:0046166">
    <property type="term" value="P:glyceraldehyde-3-phosphate biosynthetic process"/>
    <property type="evidence" value="ECO:0007669"/>
    <property type="project" value="TreeGrafter"/>
</dbReference>
<dbReference type="GO" id="GO:0019563">
    <property type="term" value="P:glycerol catabolic process"/>
    <property type="evidence" value="ECO:0007669"/>
    <property type="project" value="TreeGrafter"/>
</dbReference>
<dbReference type="GO" id="GO:0006096">
    <property type="term" value="P:glycolytic process"/>
    <property type="evidence" value="ECO:0007669"/>
    <property type="project" value="UniProtKB-UniPathway"/>
</dbReference>
<dbReference type="CDD" id="cd00311">
    <property type="entry name" value="TIM"/>
    <property type="match status" value="1"/>
</dbReference>
<dbReference type="FunFam" id="3.20.20.70:FF:000025">
    <property type="entry name" value="Triosephosphate isomerase"/>
    <property type="match status" value="1"/>
</dbReference>
<dbReference type="Gene3D" id="3.20.20.70">
    <property type="entry name" value="Aldolase class I"/>
    <property type="match status" value="1"/>
</dbReference>
<dbReference type="HAMAP" id="MF_00147_B">
    <property type="entry name" value="TIM_B"/>
    <property type="match status" value="1"/>
</dbReference>
<dbReference type="InterPro" id="IPR013785">
    <property type="entry name" value="Aldolase_TIM"/>
</dbReference>
<dbReference type="InterPro" id="IPR035990">
    <property type="entry name" value="TIM_sf"/>
</dbReference>
<dbReference type="InterPro" id="IPR022896">
    <property type="entry name" value="TrioseP_Isoase_bac/euk"/>
</dbReference>
<dbReference type="InterPro" id="IPR000652">
    <property type="entry name" value="Triosephosphate_isomerase"/>
</dbReference>
<dbReference type="InterPro" id="IPR020861">
    <property type="entry name" value="Triosephosphate_isomerase_AS"/>
</dbReference>
<dbReference type="NCBIfam" id="TIGR00419">
    <property type="entry name" value="tim"/>
    <property type="match status" value="1"/>
</dbReference>
<dbReference type="PANTHER" id="PTHR21139">
    <property type="entry name" value="TRIOSEPHOSPHATE ISOMERASE"/>
    <property type="match status" value="1"/>
</dbReference>
<dbReference type="PANTHER" id="PTHR21139:SF34">
    <property type="entry name" value="TRIOSEPHOSPHATE ISOMERASE, CYTOSOLIC"/>
    <property type="match status" value="1"/>
</dbReference>
<dbReference type="Pfam" id="PF00121">
    <property type="entry name" value="TIM"/>
    <property type="match status" value="1"/>
</dbReference>
<dbReference type="SUPFAM" id="SSF51351">
    <property type="entry name" value="Triosephosphate isomerase (TIM)"/>
    <property type="match status" value="1"/>
</dbReference>
<dbReference type="PROSITE" id="PS00171">
    <property type="entry name" value="TIM_1"/>
    <property type="match status" value="1"/>
</dbReference>
<dbReference type="PROSITE" id="PS51440">
    <property type="entry name" value="TIM_2"/>
    <property type="match status" value="1"/>
</dbReference>
<evidence type="ECO:0000250" key="1"/>
<evidence type="ECO:0000305" key="2"/>
<feature type="chain" id="PRO_0000090152" description="Triosephosphate isomerase, cytosolic">
    <location>
        <begin position="1"/>
        <end position="254"/>
    </location>
</feature>
<feature type="active site" description="Electrophile" evidence="1">
    <location>
        <position position="96"/>
    </location>
</feature>
<feature type="active site" description="Proton acceptor" evidence="1">
    <location>
        <position position="166"/>
    </location>
</feature>
<feature type="binding site" evidence="1">
    <location>
        <position position="10"/>
    </location>
    <ligand>
        <name>substrate</name>
    </ligand>
</feature>
<feature type="binding site" evidence="1">
    <location>
        <position position="12"/>
    </location>
    <ligand>
        <name>substrate</name>
    </ligand>
</feature>
<comment type="catalytic activity">
    <reaction>
        <text>D-glyceraldehyde 3-phosphate = dihydroxyacetone phosphate</text>
        <dbReference type="Rhea" id="RHEA:18585"/>
        <dbReference type="ChEBI" id="CHEBI:57642"/>
        <dbReference type="ChEBI" id="CHEBI:59776"/>
        <dbReference type="EC" id="5.3.1.1"/>
    </reaction>
</comment>
<comment type="pathway">
    <text>Carbohydrate biosynthesis; gluconeogenesis.</text>
</comment>
<comment type="pathway">
    <text>Carbohydrate degradation; glycolysis; D-glyceraldehyde 3-phosphate from glycerone phosphate: step 1/1.</text>
</comment>
<comment type="subunit">
    <text evidence="1">Homodimer.</text>
</comment>
<comment type="subcellular location">
    <subcellularLocation>
        <location evidence="2">Cytoplasm</location>
    </subcellularLocation>
</comment>
<comment type="miscellaneous">
    <text>In plants, there are two types of TPIS, cytosolic and plastid.</text>
</comment>
<comment type="similarity">
    <text evidence="2">Belongs to the triosephosphate isomerase family.</text>
</comment>
<gene>
    <name type="primary">TPIP1</name>
</gene>
<proteinExistence type="evidence at transcript level"/>